<accession>Q5P5P9</accession>
<name>GLMU_AROAE</name>
<sequence length="455" mass="48890">MEVVILAAGQGKRMRSALPKVLQPIAGRPMLEHVIAAAQALEARRICVVHGHGGEAVRARLQHAAVQWALQQPQLGTGHAVLQALPHLTDGDMALVLYGDVPLIGVPTLRRLEAAAGGERLALLTVELADPSGYGRILRDGAGRVVRIVEEKDASADERRVREVNTGILVAPVARLRDWLARLGNDNAQREYYLTDIIGMAVAEGVEVTTVQPDAIWETLGVNSKAQLAELERLHQRNIATRLMEDGVTLFDPSRIDVRGELLCGRDVEIDVNCVFEGRVEIADDVRIGANCVIRNARIGAGTRLAPFSHVEDTTTGRDCVIGPYARTRPGTTLGDGVHLGNFVEVKNSAIADDSKANHLAYIGDADIGRRVNVGAGTITCNYDGANKYRTTIGDDVFIGSDTQLVAPVRVGRGATLGAGTTLTKDAPEDQLTVSRARQISIPGWKRPVKKKAGE</sequence>
<feature type="chain" id="PRO_0000233725" description="Bifunctional protein GlmU">
    <location>
        <begin position="1"/>
        <end position="455"/>
    </location>
</feature>
<feature type="region of interest" description="Pyrophosphorylase" evidence="1">
    <location>
        <begin position="1"/>
        <end position="225"/>
    </location>
</feature>
<feature type="region of interest" description="Linker" evidence="1">
    <location>
        <begin position="226"/>
        <end position="246"/>
    </location>
</feature>
<feature type="region of interest" description="N-acetyltransferase" evidence="1">
    <location>
        <begin position="247"/>
        <end position="455"/>
    </location>
</feature>
<feature type="active site" description="Proton acceptor" evidence="1">
    <location>
        <position position="359"/>
    </location>
</feature>
<feature type="binding site" evidence="1">
    <location>
        <begin position="6"/>
        <end position="9"/>
    </location>
    <ligand>
        <name>UDP-N-acetyl-alpha-D-glucosamine</name>
        <dbReference type="ChEBI" id="CHEBI:57705"/>
    </ligand>
</feature>
<feature type="binding site" evidence="1">
    <location>
        <position position="20"/>
    </location>
    <ligand>
        <name>UDP-N-acetyl-alpha-D-glucosamine</name>
        <dbReference type="ChEBI" id="CHEBI:57705"/>
    </ligand>
</feature>
<feature type="binding site" evidence="1">
    <location>
        <position position="71"/>
    </location>
    <ligand>
        <name>UDP-N-acetyl-alpha-D-glucosamine</name>
        <dbReference type="ChEBI" id="CHEBI:57705"/>
    </ligand>
</feature>
<feature type="binding site" evidence="1">
    <location>
        <begin position="76"/>
        <end position="77"/>
    </location>
    <ligand>
        <name>UDP-N-acetyl-alpha-D-glucosamine</name>
        <dbReference type="ChEBI" id="CHEBI:57705"/>
    </ligand>
</feature>
<feature type="binding site" evidence="1">
    <location>
        <begin position="98"/>
        <end position="100"/>
    </location>
    <ligand>
        <name>UDP-N-acetyl-alpha-D-glucosamine</name>
        <dbReference type="ChEBI" id="CHEBI:57705"/>
    </ligand>
</feature>
<feature type="binding site" evidence="1">
    <location>
        <position position="100"/>
    </location>
    <ligand>
        <name>Mg(2+)</name>
        <dbReference type="ChEBI" id="CHEBI:18420"/>
    </ligand>
</feature>
<feature type="binding site" evidence="1">
    <location>
        <position position="135"/>
    </location>
    <ligand>
        <name>UDP-N-acetyl-alpha-D-glucosamine</name>
        <dbReference type="ChEBI" id="CHEBI:57705"/>
    </ligand>
</feature>
<feature type="binding site" evidence="1">
    <location>
        <position position="150"/>
    </location>
    <ligand>
        <name>UDP-N-acetyl-alpha-D-glucosamine</name>
        <dbReference type="ChEBI" id="CHEBI:57705"/>
    </ligand>
</feature>
<feature type="binding site" evidence="1">
    <location>
        <position position="165"/>
    </location>
    <ligand>
        <name>UDP-N-acetyl-alpha-D-glucosamine</name>
        <dbReference type="ChEBI" id="CHEBI:57705"/>
    </ligand>
</feature>
<feature type="binding site" evidence="1">
    <location>
        <position position="223"/>
    </location>
    <ligand>
        <name>Mg(2+)</name>
        <dbReference type="ChEBI" id="CHEBI:18420"/>
    </ligand>
</feature>
<feature type="binding site" evidence="1">
    <location>
        <position position="223"/>
    </location>
    <ligand>
        <name>UDP-N-acetyl-alpha-D-glucosamine</name>
        <dbReference type="ChEBI" id="CHEBI:57705"/>
    </ligand>
</feature>
<feature type="binding site" evidence="1">
    <location>
        <position position="329"/>
    </location>
    <ligand>
        <name>UDP-N-acetyl-alpha-D-glucosamine</name>
        <dbReference type="ChEBI" id="CHEBI:57705"/>
    </ligand>
</feature>
<feature type="binding site" evidence="1">
    <location>
        <position position="347"/>
    </location>
    <ligand>
        <name>UDP-N-acetyl-alpha-D-glucosamine</name>
        <dbReference type="ChEBI" id="CHEBI:57705"/>
    </ligand>
</feature>
<feature type="binding site" evidence="1">
    <location>
        <position position="362"/>
    </location>
    <ligand>
        <name>UDP-N-acetyl-alpha-D-glucosamine</name>
        <dbReference type="ChEBI" id="CHEBI:57705"/>
    </ligand>
</feature>
<feature type="binding site" evidence="1">
    <location>
        <position position="373"/>
    </location>
    <ligand>
        <name>UDP-N-acetyl-alpha-D-glucosamine</name>
        <dbReference type="ChEBI" id="CHEBI:57705"/>
    </ligand>
</feature>
<feature type="binding site" evidence="1">
    <location>
        <position position="376"/>
    </location>
    <ligand>
        <name>acetyl-CoA</name>
        <dbReference type="ChEBI" id="CHEBI:57288"/>
    </ligand>
</feature>
<feature type="binding site" evidence="1">
    <location>
        <begin position="382"/>
        <end position="383"/>
    </location>
    <ligand>
        <name>acetyl-CoA</name>
        <dbReference type="ChEBI" id="CHEBI:57288"/>
    </ligand>
</feature>
<feature type="binding site" evidence="1">
    <location>
        <position position="401"/>
    </location>
    <ligand>
        <name>acetyl-CoA</name>
        <dbReference type="ChEBI" id="CHEBI:57288"/>
    </ligand>
</feature>
<feature type="binding site" evidence="1">
    <location>
        <position position="419"/>
    </location>
    <ligand>
        <name>acetyl-CoA</name>
        <dbReference type="ChEBI" id="CHEBI:57288"/>
    </ligand>
</feature>
<feature type="binding site" evidence="1">
    <location>
        <position position="436"/>
    </location>
    <ligand>
        <name>acetyl-CoA</name>
        <dbReference type="ChEBI" id="CHEBI:57288"/>
    </ligand>
</feature>
<protein>
    <recommendedName>
        <fullName evidence="1">Bifunctional protein GlmU</fullName>
    </recommendedName>
    <domain>
        <recommendedName>
            <fullName evidence="1">UDP-N-acetylglucosamine pyrophosphorylase</fullName>
            <ecNumber evidence="1">2.7.7.23</ecNumber>
        </recommendedName>
        <alternativeName>
            <fullName evidence="1">N-acetylglucosamine-1-phosphate uridyltransferase</fullName>
        </alternativeName>
    </domain>
    <domain>
        <recommendedName>
            <fullName evidence="1">Glucosamine-1-phosphate N-acetyltransferase</fullName>
            <ecNumber evidence="1">2.3.1.157</ecNumber>
        </recommendedName>
    </domain>
</protein>
<proteinExistence type="inferred from homology"/>
<organism>
    <name type="scientific">Aromatoleum aromaticum (strain DSM 19018 / LMG 30748 / EbN1)</name>
    <name type="common">Azoarcus sp. (strain EbN1)</name>
    <dbReference type="NCBI Taxonomy" id="76114"/>
    <lineage>
        <taxon>Bacteria</taxon>
        <taxon>Pseudomonadati</taxon>
        <taxon>Pseudomonadota</taxon>
        <taxon>Betaproteobacteria</taxon>
        <taxon>Rhodocyclales</taxon>
        <taxon>Rhodocyclaceae</taxon>
        <taxon>Aromatoleum</taxon>
    </lineage>
</organism>
<comment type="function">
    <text evidence="1">Catalyzes the last two sequential reactions in the de novo biosynthetic pathway for UDP-N-acetylglucosamine (UDP-GlcNAc). The C-terminal domain catalyzes the transfer of acetyl group from acetyl coenzyme A to glucosamine-1-phosphate (GlcN-1-P) to produce N-acetylglucosamine-1-phosphate (GlcNAc-1-P), which is converted into UDP-GlcNAc by the transfer of uridine 5-monophosphate (from uridine 5-triphosphate), a reaction catalyzed by the N-terminal domain.</text>
</comment>
<comment type="catalytic activity">
    <reaction evidence="1">
        <text>alpha-D-glucosamine 1-phosphate + acetyl-CoA = N-acetyl-alpha-D-glucosamine 1-phosphate + CoA + H(+)</text>
        <dbReference type="Rhea" id="RHEA:13725"/>
        <dbReference type="ChEBI" id="CHEBI:15378"/>
        <dbReference type="ChEBI" id="CHEBI:57287"/>
        <dbReference type="ChEBI" id="CHEBI:57288"/>
        <dbReference type="ChEBI" id="CHEBI:57776"/>
        <dbReference type="ChEBI" id="CHEBI:58516"/>
        <dbReference type="EC" id="2.3.1.157"/>
    </reaction>
</comment>
<comment type="catalytic activity">
    <reaction evidence="1">
        <text>N-acetyl-alpha-D-glucosamine 1-phosphate + UTP + H(+) = UDP-N-acetyl-alpha-D-glucosamine + diphosphate</text>
        <dbReference type="Rhea" id="RHEA:13509"/>
        <dbReference type="ChEBI" id="CHEBI:15378"/>
        <dbReference type="ChEBI" id="CHEBI:33019"/>
        <dbReference type="ChEBI" id="CHEBI:46398"/>
        <dbReference type="ChEBI" id="CHEBI:57705"/>
        <dbReference type="ChEBI" id="CHEBI:57776"/>
        <dbReference type="EC" id="2.7.7.23"/>
    </reaction>
</comment>
<comment type="cofactor">
    <cofactor evidence="1">
        <name>Mg(2+)</name>
        <dbReference type="ChEBI" id="CHEBI:18420"/>
    </cofactor>
    <text evidence="1">Binds 1 Mg(2+) ion per subunit.</text>
</comment>
<comment type="pathway">
    <text evidence="1">Nucleotide-sugar biosynthesis; UDP-N-acetyl-alpha-D-glucosamine biosynthesis; N-acetyl-alpha-D-glucosamine 1-phosphate from alpha-D-glucosamine 6-phosphate (route II): step 2/2.</text>
</comment>
<comment type="pathway">
    <text evidence="1">Nucleotide-sugar biosynthesis; UDP-N-acetyl-alpha-D-glucosamine biosynthesis; UDP-N-acetyl-alpha-D-glucosamine from N-acetyl-alpha-D-glucosamine 1-phosphate: step 1/1.</text>
</comment>
<comment type="pathway">
    <text evidence="1">Bacterial outer membrane biogenesis; LPS lipid A biosynthesis.</text>
</comment>
<comment type="subunit">
    <text evidence="1">Homotrimer.</text>
</comment>
<comment type="subcellular location">
    <subcellularLocation>
        <location evidence="1">Cytoplasm</location>
    </subcellularLocation>
</comment>
<comment type="similarity">
    <text evidence="1">In the N-terminal section; belongs to the N-acetylglucosamine-1-phosphate uridyltransferase family.</text>
</comment>
<comment type="similarity">
    <text evidence="1">In the C-terminal section; belongs to the transferase hexapeptide repeat family.</text>
</comment>
<gene>
    <name evidence="1" type="primary">glmU</name>
    <name type="ordered locus">AZOSEA12380</name>
    <name type="ORF">ebA2245</name>
</gene>
<reference key="1">
    <citation type="journal article" date="2005" name="Arch. Microbiol.">
        <title>The genome sequence of an anaerobic aromatic-degrading denitrifying bacterium, strain EbN1.</title>
        <authorList>
            <person name="Rabus R."/>
            <person name="Kube M."/>
            <person name="Heider J."/>
            <person name="Beck A."/>
            <person name="Heitmann K."/>
            <person name="Widdel F."/>
            <person name="Reinhardt R."/>
        </authorList>
    </citation>
    <scope>NUCLEOTIDE SEQUENCE [LARGE SCALE GENOMIC DNA]</scope>
    <source>
        <strain>DSM 19018 / LMG 30748 / EbN1</strain>
    </source>
</reference>
<evidence type="ECO:0000255" key="1">
    <source>
        <dbReference type="HAMAP-Rule" id="MF_01631"/>
    </source>
</evidence>
<keyword id="KW-0012">Acyltransferase</keyword>
<keyword id="KW-0133">Cell shape</keyword>
<keyword id="KW-0961">Cell wall biogenesis/degradation</keyword>
<keyword id="KW-0963">Cytoplasm</keyword>
<keyword id="KW-0460">Magnesium</keyword>
<keyword id="KW-0479">Metal-binding</keyword>
<keyword id="KW-0511">Multifunctional enzyme</keyword>
<keyword id="KW-0548">Nucleotidyltransferase</keyword>
<keyword id="KW-0573">Peptidoglycan synthesis</keyword>
<keyword id="KW-1185">Reference proteome</keyword>
<keyword id="KW-0677">Repeat</keyword>
<keyword id="KW-0808">Transferase</keyword>
<dbReference type="EC" id="2.7.7.23" evidence="1"/>
<dbReference type="EC" id="2.3.1.157" evidence="1"/>
<dbReference type="EMBL" id="CR555306">
    <property type="protein sequence ID" value="CAI07363.1"/>
    <property type="molecule type" value="Genomic_DNA"/>
</dbReference>
<dbReference type="RefSeq" id="WP_011237083.1">
    <property type="nucleotide sequence ID" value="NC_006513.1"/>
</dbReference>
<dbReference type="SMR" id="Q5P5P9"/>
<dbReference type="STRING" id="76114.ebA2245"/>
<dbReference type="KEGG" id="eba:ebA2245"/>
<dbReference type="eggNOG" id="COG1207">
    <property type="taxonomic scope" value="Bacteria"/>
</dbReference>
<dbReference type="HOGENOM" id="CLU_029499_15_2_4"/>
<dbReference type="OrthoDB" id="9775031at2"/>
<dbReference type="UniPathway" id="UPA00113">
    <property type="reaction ID" value="UER00532"/>
</dbReference>
<dbReference type="UniPathway" id="UPA00113">
    <property type="reaction ID" value="UER00533"/>
</dbReference>
<dbReference type="UniPathway" id="UPA00973"/>
<dbReference type="Proteomes" id="UP000006552">
    <property type="component" value="Chromosome"/>
</dbReference>
<dbReference type="GO" id="GO:0005737">
    <property type="term" value="C:cytoplasm"/>
    <property type="evidence" value="ECO:0007669"/>
    <property type="project" value="UniProtKB-SubCell"/>
</dbReference>
<dbReference type="GO" id="GO:0016020">
    <property type="term" value="C:membrane"/>
    <property type="evidence" value="ECO:0007669"/>
    <property type="project" value="GOC"/>
</dbReference>
<dbReference type="GO" id="GO:0019134">
    <property type="term" value="F:glucosamine-1-phosphate N-acetyltransferase activity"/>
    <property type="evidence" value="ECO:0007669"/>
    <property type="project" value="UniProtKB-UniRule"/>
</dbReference>
<dbReference type="GO" id="GO:0000287">
    <property type="term" value="F:magnesium ion binding"/>
    <property type="evidence" value="ECO:0007669"/>
    <property type="project" value="UniProtKB-UniRule"/>
</dbReference>
<dbReference type="GO" id="GO:0003977">
    <property type="term" value="F:UDP-N-acetylglucosamine diphosphorylase activity"/>
    <property type="evidence" value="ECO:0007669"/>
    <property type="project" value="UniProtKB-UniRule"/>
</dbReference>
<dbReference type="GO" id="GO:0000902">
    <property type="term" value="P:cell morphogenesis"/>
    <property type="evidence" value="ECO:0007669"/>
    <property type="project" value="UniProtKB-UniRule"/>
</dbReference>
<dbReference type="GO" id="GO:0071555">
    <property type="term" value="P:cell wall organization"/>
    <property type="evidence" value="ECO:0007669"/>
    <property type="project" value="UniProtKB-KW"/>
</dbReference>
<dbReference type="GO" id="GO:0009245">
    <property type="term" value="P:lipid A biosynthetic process"/>
    <property type="evidence" value="ECO:0007669"/>
    <property type="project" value="UniProtKB-UniRule"/>
</dbReference>
<dbReference type="GO" id="GO:0009252">
    <property type="term" value="P:peptidoglycan biosynthetic process"/>
    <property type="evidence" value="ECO:0007669"/>
    <property type="project" value="UniProtKB-UniRule"/>
</dbReference>
<dbReference type="GO" id="GO:0008360">
    <property type="term" value="P:regulation of cell shape"/>
    <property type="evidence" value="ECO:0007669"/>
    <property type="project" value="UniProtKB-KW"/>
</dbReference>
<dbReference type="GO" id="GO:0006048">
    <property type="term" value="P:UDP-N-acetylglucosamine biosynthetic process"/>
    <property type="evidence" value="ECO:0007669"/>
    <property type="project" value="UniProtKB-UniPathway"/>
</dbReference>
<dbReference type="CDD" id="cd02540">
    <property type="entry name" value="GT2_GlmU_N_bac"/>
    <property type="match status" value="1"/>
</dbReference>
<dbReference type="CDD" id="cd03353">
    <property type="entry name" value="LbH_GlmU_C"/>
    <property type="match status" value="1"/>
</dbReference>
<dbReference type="Gene3D" id="2.160.10.10">
    <property type="entry name" value="Hexapeptide repeat proteins"/>
    <property type="match status" value="1"/>
</dbReference>
<dbReference type="Gene3D" id="3.90.550.10">
    <property type="entry name" value="Spore Coat Polysaccharide Biosynthesis Protein SpsA, Chain A"/>
    <property type="match status" value="1"/>
</dbReference>
<dbReference type="HAMAP" id="MF_01631">
    <property type="entry name" value="GlmU"/>
    <property type="match status" value="1"/>
</dbReference>
<dbReference type="InterPro" id="IPR005882">
    <property type="entry name" value="Bifunctional_GlmU"/>
</dbReference>
<dbReference type="InterPro" id="IPR050065">
    <property type="entry name" value="GlmU-like"/>
</dbReference>
<dbReference type="InterPro" id="IPR038009">
    <property type="entry name" value="GlmU_C_LbH"/>
</dbReference>
<dbReference type="InterPro" id="IPR001451">
    <property type="entry name" value="Hexapep"/>
</dbReference>
<dbReference type="InterPro" id="IPR025877">
    <property type="entry name" value="MobA-like_NTP_Trfase"/>
</dbReference>
<dbReference type="InterPro" id="IPR029044">
    <property type="entry name" value="Nucleotide-diphossugar_trans"/>
</dbReference>
<dbReference type="InterPro" id="IPR011004">
    <property type="entry name" value="Trimer_LpxA-like_sf"/>
</dbReference>
<dbReference type="NCBIfam" id="TIGR01173">
    <property type="entry name" value="glmU"/>
    <property type="match status" value="1"/>
</dbReference>
<dbReference type="PANTHER" id="PTHR43584:SF3">
    <property type="entry name" value="BIFUNCTIONAL PROTEIN GLMU"/>
    <property type="match status" value="1"/>
</dbReference>
<dbReference type="PANTHER" id="PTHR43584">
    <property type="entry name" value="NUCLEOTIDYL TRANSFERASE"/>
    <property type="match status" value="1"/>
</dbReference>
<dbReference type="Pfam" id="PF00132">
    <property type="entry name" value="Hexapep"/>
    <property type="match status" value="3"/>
</dbReference>
<dbReference type="Pfam" id="PF12804">
    <property type="entry name" value="NTP_transf_3"/>
    <property type="match status" value="1"/>
</dbReference>
<dbReference type="SUPFAM" id="SSF53448">
    <property type="entry name" value="Nucleotide-diphospho-sugar transferases"/>
    <property type="match status" value="1"/>
</dbReference>
<dbReference type="SUPFAM" id="SSF51161">
    <property type="entry name" value="Trimeric LpxA-like enzymes"/>
    <property type="match status" value="1"/>
</dbReference>